<gene>
    <name evidence="1" type="primary">menD</name>
    <name type="ordered locus">plu3073</name>
</gene>
<accession>Q7N2K3</accession>
<name>MEND_PHOLL</name>
<sequence length="564" mass="62123">MSNSAFNRRWAELLLEALTRHGLRHVCIAPGSRSTPLTIAAAANNKLICHTHFDERGLGHLALGLSKASREPVAVIVTSGTAVANLYPSLIEASLTGERMVFLTADRPPELMDCGANQAIRQNGIFASHPCQTISLPRPTVDIPASWLASVIDHSMANLQHGAVHINCPFAEPLYGNEEPAYDEWQQQLGDWWKSKTPWLSQPVAKVVAEVPDWDCWQQKKGVVLAGRMSAEEGVNVAKWAKALSWPLIGNALSQTGQPLPCADLWLDNPHVQEILAQAQLVVQFGSSLIGKCLLQWQAKCQPQEFWIIDPIPGRLDPANHRGKKLTCHIADWLLAHPAQPCIPWAQSCTLWAEELIVWSEKAVNCVRTELAGKFGEATVAYRLRELLPERGQLFVGNSLIIRLIDTLGQLPAGYPVYSNRGASGIDGLISTAAGVQRATAKPTLAVIGDLSALYDLNSLALLRHPSAPMVLIVVNNNGGQIFSLLPTQEEARQRFYCMPQYVNFDHAAAMFGLKYASPQNWMELQQSIKQAWQQNETTLIELKVPDREGAECLQQLLKQVAML</sequence>
<protein>
    <recommendedName>
        <fullName evidence="1">2-succinyl-5-enolpyruvyl-6-hydroxy-3-cyclohexene-1-carboxylate synthase</fullName>
        <shortName evidence="1">SEPHCHC synthase</shortName>
        <ecNumber evidence="1">2.2.1.9</ecNumber>
    </recommendedName>
    <alternativeName>
        <fullName evidence="1">Menaquinone biosynthesis protein MenD</fullName>
    </alternativeName>
</protein>
<evidence type="ECO:0000255" key="1">
    <source>
        <dbReference type="HAMAP-Rule" id="MF_01659"/>
    </source>
</evidence>
<proteinExistence type="inferred from homology"/>
<feature type="chain" id="PRO_0000341796" description="2-succinyl-5-enolpyruvyl-6-hydroxy-3-cyclohexene-1-carboxylate synthase">
    <location>
        <begin position="1"/>
        <end position="564"/>
    </location>
</feature>
<keyword id="KW-0460">Magnesium</keyword>
<keyword id="KW-0464">Manganese</keyword>
<keyword id="KW-0474">Menaquinone biosynthesis</keyword>
<keyword id="KW-0479">Metal-binding</keyword>
<keyword id="KW-1185">Reference proteome</keyword>
<keyword id="KW-0786">Thiamine pyrophosphate</keyword>
<keyword id="KW-0808">Transferase</keyword>
<comment type="function">
    <text evidence="1">Catalyzes the thiamine diphosphate-dependent decarboxylation of 2-oxoglutarate and the subsequent addition of the resulting succinic semialdehyde-thiamine pyrophosphate anion to isochorismate to yield 2-succinyl-5-enolpyruvyl-6-hydroxy-3-cyclohexene-1-carboxylate (SEPHCHC).</text>
</comment>
<comment type="catalytic activity">
    <reaction evidence="1">
        <text>isochorismate + 2-oxoglutarate + H(+) = 5-enolpyruvoyl-6-hydroxy-2-succinyl-cyclohex-3-ene-1-carboxylate + CO2</text>
        <dbReference type="Rhea" id="RHEA:25593"/>
        <dbReference type="ChEBI" id="CHEBI:15378"/>
        <dbReference type="ChEBI" id="CHEBI:16526"/>
        <dbReference type="ChEBI" id="CHEBI:16810"/>
        <dbReference type="ChEBI" id="CHEBI:29780"/>
        <dbReference type="ChEBI" id="CHEBI:58818"/>
        <dbReference type="EC" id="2.2.1.9"/>
    </reaction>
</comment>
<comment type="cofactor">
    <cofactor evidence="1">
        <name>Mg(2+)</name>
        <dbReference type="ChEBI" id="CHEBI:18420"/>
    </cofactor>
    <cofactor evidence="1">
        <name>Mn(2+)</name>
        <dbReference type="ChEBI" id="CHEBI:29035"/>
    </cofactor>
</comment>
<comment type="cofactor">
    <cofactor evidence="1">
        <name>thiamine diphosphate</name>
        <dbReference type="ChEBI" id="CHEBI:58937"/>
    </cofactor>
    <text evidence="1">Binds 1 thiamine pyrophosphate per subunit.</text>
</comment>
<comment type="pathway">
    <text evidence="1">Quinol/quinone metabolism; 1,4-dihydroxy-2-naphthoate biosynthesis; 1,4-dihydroxy-2-naphthoate from chorismate: step 2/7.</text>
</comment>
<comment type="pathway">
    <text evidence="1">Quinol/quinone metabolism; menaquinone biosynthesis.</text>
</comment>
<comment type="subunit">
    <text evidence="1">Homodimer.</text>
</comment>
<comment type="similarity">
    <text evidence="1">Belongs to the TPP enzyme family. MenD subfamily.</text>
</comment>
<reference key="1">
    <citation type="journal article" date="2003" name="Nat. Biotechnol.">
        <title>The genome sequence of the entomopathogenic bacterium Photorhabdus luminescens.</title>
        <authorList>
            <person name="Duchaud E."/>
            <person name="Rusniok C."/>
            <person name="Frangeul L."/>
            <person name="Buchrieser C."/>
            <person name="Givaudan A."/>
            <person name="Taourit S."/>
            <person name="Bocs S."/>
            <person name="Boursaux-Eude C."/>
            <person name="Chandler M."/>
            <person name="Charles J.-F."/>
            <person name="Dassa E."/>
            <person name="Derose R."/>
            <person name="Derzelle S."/>
            <person name="Freyssinet G."/>
            <person name="Gaudriault S."/>
            <person name="Medigue C."/>
            <person name="Lanois A."/>
            <person name="Powell K."/>
            <person name="Siguier P."/>
            <person name="Vincent R."/>
            <person name="Wingate V."/>
            <person name="Zouine M."/>
            <person name="Glaser P."/>
            <person name="Boemare N."/>
            <person name="Danchin A."/>
            <person name="Kunst F."/>
        </authorList>
    </citation>
    <scope>NUCLEOTIDE SEQUENCE [LARGE SCALE GENOMIC DNA]</scope>
    <source>
        <strain>DSM 15139 / CIP 105565 / TT01</strain>
    </source>
</reference>
<dbReference type="EC" id="2.2.1.9" evidence="1"/>
<dbReference type="EMBL" id="BX571869">
    <property type="protein sequence ID" value="CAE15447.1"/>
    <property type="molecule type" value="Genomic_DNA"/>
</dbReference>
<dbReference type="RefSeq" id="WP_011147290.1">
    <property type="nucleotide sequence ID" value="NC_005126.1"/>
</dbReference>
<dbReference type="SMR" id="Q7N2K3"/>
<dbReference type="STRING" id="243265.plu3073"/>
<dbReference type="GeneID" id="48849334"/>
<dbReference type="KEGG" id="plu:plu3073"/>
<dbReference type="eggNOG" id="COG1165">
    <property type="taxonomic scope" value="Bacteria"/>
</dbReference>
<dbReference type="HOGENOM" id="CLU_006051_3_0_6"/>
<dbReference type="OrthoDB" id="9791859at2"/>
<dbReference type="UniPathway" id="UPA00079"/>
<dbReference type="UniPathway" id="UPA01057">
    <property type="reaction ID" value="UER00164"/>
</dbReference>
<dbReference type="Proteomes" id="UP000002514">
    <property type="component" value="Chromosome"/>
</dbReference>
<dbReference type="GO" id="GO:0070204">
    <property type="term" value="F:2-succinyl-5-enolpyruvyl-6-hydroxy-3-cyclohexene-1-carboxylic-acid synthase activity"/>
    <property type="evidence" value="ECO:0007669"/>
    <property type="project" value="UniProtKB-UniRule"/>
</dbReference>
<dbReference type="GO" id="GO:0000287">
    <property type="term" value="F:magnesium ion binding"/>
    <property type="evidence" value="ECO:0007669"/>
    <property type="project" value="UniProtKB-UniRule"/>
</dbReference>
<dbReference type="GO" id="GO:0030145">
    <property type="term" value="F:manganese ion binding"/>
    <property type="evidence" value="ECO:0007669"/>
    <property type="project" value="UniProtKB-UniRule"/>
</dbReference>
<dbReference type="GO" id="GO:0030976">
    <property type="term" value="F:thiamine pyrophosphate binding"/>
    <property type="evidence" value="ECO:0007669"/>
    <property type="project" value="UniProtKB-UniRule"/>
</dbReference>
<dbReference type="GO" id="GO:0009234">
    <property type="term" value="P:menaquinone biosynthetic process"/>
    <property type="evidence" value="ECO:0007669"/>
    <property type="project" value="UniProtKB-UniRule"/>
</dbReference>
<dbReference type="CDD" id="cd07037">
    <property type="entry name" value="TPP_PYR_MenD"/>
    <property type="match status" value="1"/>
</dbReference>
<dbReference type="CDD" id="cd02009">
    <property type="entry name" value="TPP_SHCHC_synthase"/>
    <property type="match status" value="1"/>
</dbReference>
<dbReference type="FunFam" id="3.40.50.970:FF:000029">
    <property type="entry name" value="2-succinyl-5-enolpyruvyl-6-hydroxy-3-cyclohexene-1-carboxylate synthase"/>
    <property type="match status" value="1"/>
</dbReference>
<dbReference type="Gene3D" id="3.40.50.970">
    <property type="match status" value="2"/>
</dbReference>
<dbReference type="Gene3D" id="3.40.50.1220">
    <property type="entry name" value="TPP-binding domain"/>
    <property type="match status" value="1"/>
</dbReference>
<dbReference type="HAMAP" id="MF_01659">
    <property type="entry name" value="MenD"/>
    <property type="match status" value="1"/>
</dbReference>
<dbReference type="InterPro" id="IPR004433">
    <property type="entry name" value="MenaQ_synth_MenD"/>
</dbReference>
<dbReference type="InterPro" id="IPR032264">
    <property type="entry name" value="MenD_middle"/>
</dbReference>
<dbReference type="InterPro" id="IPR029061">
    <property type="entry name" value="THDP-binding"/>
</dbReference>
<dbReference type="InterPro" id="IPR012001">
    <property type="entry name" value="Thiamin_PyroP_enz_TPP-bd_dom"/>
</dbReference>
<dbReference type="InterPro" id="IPR011766">
    <property type="entry name" value="TPP_enzyme_TPP-bd"/>
</dbReference>
<dbReference type="NCBIfam" id="TIGR00173">
    <property type="entry name" value="menD"/>
    <property type="match status" value="1"/>
</dbReference>
<dbReference type="PANTHER" id="PTHR42916">
    <property type="entry name" value="2-SUCCINYL-5-ENOLPYRUVYL-6-HYDROXY-3-CYCLOHEXENE-1-CARBOXYLATE SYNTHASE"/>
    <property type="match status" value="1"/>
</dbReference>
<dbReference type="PANTHER" id="PTHR42916:SF1">
    <property type="entry name" value="PROTEIN PHYLLO, CHLOROPLASTIC"/>
    <property type="match status" value="1"/>
</dbReference>
<dbReference type="Pfam" id="PF02775">
    <property type="entry name" value="TPP_enzyme_C"/>
    <property type="match status" value="1"/>
</dbReference>
<dbReference type="Pfam" id="PF16582">
    <property type="entry name" value="TPP_enzyme_M_2"/>
    <property type="match status" value="1"/>
</dbReference>
<dbReference type="Pfam" id="PF02776">
    <property type="entry name" value="TPP_enzyme_N"/>
    <property type="match status" value="1"/>
</dbReference>
<dbReference type="PIRSF" id="PIRSF004983">
    <property type="entry name" value="MenD"/>
    <property type="match status" value="1"/>
</dbReference>
<dbReference type="SUPFAM" id="SSF52518">
    <property type="entry name" value="Thiamin diphosphate-binding fold (THDP-binding)"/>
    <property type="match status" value="2"/>
</dbReference>
<organism>
    <name type="scientific">Photorhabdus laumondii subsp. laumondii (strain DSM 15139 / CIP 105565 / TT01)</name>
    <name type="common">Photorhabdus luminescens subsp. laumondii</name>
    <dbReference type="NCBI Taxonomy" id="243265"/>
    <lineage>
        <taxon>Bacteria</taxon>
        <taxon>Pseudomonadati</taxon>
        <taxon>Pseudomonadota</taxon>
        <taxon>Gammaproteobacteria</taxon>
        <taxon>Enterobacterales</taxon>
        <taxon>Morganellaceae</taxon>
        <taxon>Photorhabdus</taxon>
    </lineage>
</organism>